<reference evidence="7 8" key="1">
    <citation type="journal article" date="2007" name="J. Immunol.">
        <title>Identification of the zebrafish IFN receptor: implications for the origin of the vertebrate IFN system.</title>
        <authorList>
            <person name="Levraud J.-P."/>
            <person name="Boudinot P."/>
            <person name="Colin I."/>
            <person name="Benmansour A."/>
            <person name="Peyrieras N."/>
            <person name="Herbomel P."/>
            <person name="Lutfalla G."/>
        </authorList>
    </citation>
    <scope>NUCLEOTIDE SEQUENCE [MRNA]</scope>
    <scope>INDUCTION</scope>
</reference>
<reference key="2">
    <citation type="journal article" date="2013" name="Nature">
        <title>The zebrafish reference genome sequence and its relationship to the human genome.</title>
        <authorList>
            <person name="Howe K."/>
            <person name="Clark M.D."/>
            <person name="Torroja C.F."/>
            <person name="Torrance J."/>
            <person name="Berthelot C."/>
            <person name="Muffato M."/>
            <person name="Collins J.E."/>
            <person name="Humphray S."/>
            <person name="McLaren K."/>
            <person name="Matthews L."/>
            <person name="McLaren S."/>
            <person name="Sealy I."/>
            <person name="Caccamo M."/>
            <person name="Churcher C."/>
            <person name="Scott C."/>
            <person name="Barrett J.C."/>
            <person name="Koch R."/>
            <person name="Rauch G.J."/>
            <person name="White S."/>
            <person name="Chow W."/>
            <person name="Kilian B."/>
            <person name="Quintais L.T."/>
            <person name="Guerra-Assuncao J.A."/>
            <person name="Zhou Y."/>
            <person name="Gu Y."/>
            <person name="Yen J."/>
            <person name="Vogel J.H."/>
            <person name="Eyre T."/>
            <person name="Redmond S."/>
            <person name="Banerjee R."/>
            <person name="Chi J."/>
            <person name="Fu B."/>
            <person name="Langley E."/>
            <person name="Maguire S.F."/>
            <person name="Laird G.K."/>
            <person name="Lloyd D."/>
            <person name="Kenyon E."/>
            <person name="Donaldson S."/>
            <person name="Sehra H."/>
            <person name="Almeida-King J."/>
            <person name="Loveland J."/>
            <person name="Trevanion S."/>
            <person name="Jones M."/>
            <person name="Quail M."/>
            <person name="Willey D."/>
            <person name="Hunt A."/>
            <person name="Burton J."/>
            <person name="Sims S."/>
            <person name="McLay K."/>
            <person name="Plumb B."/>
            <person name="Davis J."/>
            <person name="Clee C."/>
            <person name="Oliver K."/>
            <person name="Clark R."/>
            <person name="Riddle C."/>
            <person name="Elliot D."/>
            <person name="Threadgold G."/>
            <person name="Harden G."/>
            <person name="Ware D."/>
            <person name="Begum S."/>
            <person name="Mortimore B."/>
            <person name="Kerry G."/>
            <person name="Heath P."/>
            <person name="Phillimore B."/>
            <person name="Tracey A."/>
            <person name="Corby N."/>
            <person name="Dunn M."/>
            <person name="Johnson C."/>
            <person name="Wood J."/>
            <person name="Clark S."/>
            <person name="Pelan S."/>
            <person name="Griffiths G."/>
            <person name="Smith M."/>
            <person name="Glithero R."/>
            <person name="Howden P."/>
            <person name="Barker N."/>
            <person name="Lloyd C."/>
            <person name="Stevens C."/>
            <person name="Harley J."/>
            <person name="Holt K."/>
            <person name="Panagiotidis G."/>
            <person name="Lovell J."/>
            <person name="Beasley H."/>
            <person name="Henderson C."/>
            <person name="Gordon D."/>
            <person name="Auger K."/>
            <person name="Wright D."/>
            <person name="Collins J."/>
            <person name="Raisen C."/>
            <person name="Dyer L."/>
            <person name="Leung K."/>
            <person name="Robertson L."/>
            <person name="Ambridge K."/>
            <person name="Leongamornlert D."/>
            <person name="McGuire S."/>
            <person name="Gilderthorp R."/>
            <person name="Griffiths C."/>
            <person name="Manthravadi D."/>
            <person name="Nichol S."/>
            <person name="Barker G."/>
            <person name="Whitehead S."/>
            <person name="Kay M."/>
            <person name="Brown J."/>
            <person name="Murnane C."/>
            <person name="Gray E."/>
            <person name="Humphries M."/>
            <person name="Sycamore N."/>
            <person name="Barker D."/>
            <person name="Saunders D."/>
            <person name="Wallis J."/>
            <person name="Babbage A."/>
            <person name="Hammond S."/>
            <person name="Mashreghi-Mohammadi M."/>
            <person name="Barr L."/>
            <person name="Martin S."/>
            <person name="Wray P."/>
            <person name="Ellington A."/>
            <person name="Matthews N."/>
            <person name="Ellwood M."/>
            <person name="Woodmansey R."/>
            <person name="Clark G."/>
            <person name="Cooper J."/>
            <person name="Tromans A."/>
            <person name="Grafham D."/>
            <person name="Skuce C."/>
            <person name="Pandian R."/>
            <person name="Andrews R."/>
            <person name="Harrison E."/>
            <person name="Kimberley A."/>
            <person name="Garnett J."/>
            <person name="Fosker N."/>
            <person name="Hall R."/>
            <person name="Garner P."/>
            <person name="Kelly D."/>
            <person name="Bird C."/>
            <person name="Palmer S."/>
            <person name="Gehring I."/>
            <person name="Berger A."/>
            <person name="Dooley C.M."/>
            <person name="Ersan-Urun Z."/>
            <person name="Eser C."/>
            <person name="Geiger H."/>
            <person name="Geisler M."/>
            <person name="Karotki L."/>
            <person name="Kirn A."/>
            <person name="Konantz J."/>
            <person name="Konantz M."/>
            <person name="Oberlander M."/>
            <person name="Rudolph-Geiger S."/>
            <person name="Teucke M."/>
            <person name="Lanz C."/>
            <person name="Raddatz G."/>
            <person name="Osoegawa K."/>
            <person name="Zhu B."/>
            <person name="Rapp A."/>
            <person name="Widaa S."/>
            <person name="Langford C."/>
            <person name="Yang F."/>
            <person name="Schuster S.C."/>
            <person name="Carter N.P."/>
            <person name="Harrow J."/>
            <person name="Ning Z."/>
            <person name="Herrero J."/>
            <person name="Searle S.M."/>
            <person name="Enright A."/>
            <person name="Geisler R."/>
            <person name="Plasterk R.H."/>
            <person name="Lee C."/>
            <person name="Westerfield M."/>
            <person name="de Jong P.J."/>
            <person name="Zon L.I."/>
            <person name="Postlethwait J.H."/>
            <person name="Nusslein-Volhard C."/>
            <person name="Hubbard T.J."/>
            <person name="Roest Crollius H."/>
            <person name="Rogers J."/>
            <person name="Stemple D.L."/>
        </authorList>
    </citation>
    <scope>NUCLEOTIDE SEQUENCE [LARGE SCALE GENOMIC DNA]</scope>
    <source>
        <strain>Tuebingen</strain>
    </source>
</reference>
<reference evidence="9" key="3">
    <citation type="submission" date="2005-06" db="EMBL/GenBank/DDBJ databases">
        <authorList>
            <consortium name="NIH - Zebrafish Gene Collection (ZGC) project"/>
        </authorList>
    </citation>
    <scope>NUCLEOTIDE SEQUENCE [LARGE SCALE MRNA]</scope>
</reference>
<reference key="4">
    <citation type="journal article" date="2022" name="Front. Mol. Biosci.">
        <title>Radical-SAM dependent nucleotide dehydratase (SAND), rectification of the names of an ancient iron-sulfur enzyme using NC-IUBMB recommendations.</title>
        <authorList>
            <person name="Ji Y."/>
            <person name="Wei L."/>
            <person name="Da A."/>
            <person name="Stark H."/>
            <person name="Hagedoorn P.-L."/>
            <person name="Ciofi-Baffoni S."/>
            <person name="Cowley S.A."/>
            <person name="Louro R.O."/>
            <person name="Todorovic S."/>
            <person name="Mroginski M.A."/>
            <person name="Nicolet Y."/>
            <person name="Roessler M.M."/>
            <person name="Le Brun N.E."/>
            <person name="Piccioli M."/>
            <person name="James W.S."/>
            <person name="Hagen W.R."/>
            <person name="Ebrahimi K.H."/>
        </authorList>
    </citation>
    <scope>NOMENCLATURE</scope>
</reference>
<accession>Q5RH95</accession>
<accession>A0FJI6</accession>
<feature type="chain" id="PRO_0000309588" description="S-adenosylmethionine-dependent nucleotide dehydratase RSAD2">
    <location>
        <begin position="1"/>
        <end position="359"/>
    </location>
</feature>
<feature type="domain" description="Radical SAM core" evidence="3">
    <location>
        <begin position="67"/>
        <end position="287"/>
    </location>
</feature>
<feature type="region of interest" description="Disordered" evidence="4">
    <location>
        <begin position="43"/>
        <end position="67"/>
    </location>
</feature>
<feature type="compositionally biased region" description="Basic and acidic residues" evidence="4">
    <location>
        <begin position="50"/>
        <end position="63"/>
    </location>
</feature>
<feature type="binding site" evidence="2">
    <location>
        <position position="81"/>
    </location>
    <ligand>
        <name>[4Fe-4S] cluster</name>
        <dbReference type="ChEBI" id="CHEBI:49883"/>
        <note>4Fe-4S-S-AdoMet</note>
    </ligand>
</feature>
<feature type="binding site" evidence="2">
    <location>
        <position position="85"/>
    </location>
    <ligand>
        <name>[4Fe-4S] cluster</name>
        <dbReference type="ChEBI" id="CHEBI:49883"/>
        <note>4Fe-4S-S-AdoMet</note>
    </ligand>
</feature>
<feature type="binding site" evidence="2">
    <location>
        <position position="88"/>
    </location>
    <ligand>
        <name>[4Fe-4S] cluster</name>
        <dbReference type="ChEBI" id="CHEBI:49883"/>
        <note>4Fe-4S-S-AdoMet</note>
    </ligand>
</feature>
<gene>
    <name evidence="10" type="primary">rsad2</name>
    <name evidence="8" type="synonym">vig1</name>
    <name type="ORF">si:ch211-276e8.2</name>
    <name type="ORF">zgc:112342</name>
</gene>
<name>RSAD2_DANRE</name>
<protein>
    <recommendedName>
        <fullName evidence="6">S-adenosylmethionine-dependent nucleotide dehydratase RSAD2</fullName>
        <shortName evidence="6">SAND</shortName>
    </recommendedName>
    <alternativeName>
        <fullName>Radical S-adenosyl methionine domain-containing protein 2</fullName>
    </alternativeName>
    <alternativeName>
        <fullName>Virus inhibitory protein, endoplasmic reticulum-associated, interferon-inducible</fullName>
        <shortName>Viperin</shortName>
    </alternativeName>
</protein>
<proteinExistence type="evidence at transcript level"/>
<keyword id="KW-0004">4Fe-4S</keyword>
<keyword id="KW-0051">Antiviral defense</keyword>
<keyword id="KW-0256">Endoplasmic reticulum</keyword>
<keyword id="KW-0391">Immunity</keyword>
<keyword id="KW-0399">Innate immunity</keyword>
<keyword id="KW-0408">Iron</keyword>
<keyword id="KW-0411">Iron-sulfur</keyword>
<keyword id="KW-0472">Membrane</keyword>
<keyword id="KW-0479">Metal-binding</keyword>
<keyword id="KW-1185">Reference proteome</keyword>
<keyword id="KW-0949">S-adenosyl-L-methionine</keyword>
<dbReference type="EMBL" id="EF014961">
    <property type="protein sequence ID" value="ABJ97316.1"/>
    <property type="status" value="ALT_INIT"/>
    <property type="molecule type" value="mRNA"/>
</dbReference>
<dbReference type="EMBL" id="BX571665">
    <property type="protein sequence ID" value="CAI11967.1"/>
    <property type="molecule type" value="Genomic_DNA"/>
</dbReference>
<dbReference type="EMBL" id="BC096889">
    <property type="protein sequence ID" value="AAH96889.1"/>
    <property type="molecule type" value="mRNA"/>
</dbReference>
<dbReference type="RefSeq" id="NP_001020727.1">
    <property type="nucleotide sequence ID" value="NM_001025556.1"/>
</dbReference>
<dbReference type="SMR" id="Q5RH95"/>
<dbReference type="FunCoup" id="Q5RH95">
    <property type="interactions" value="9"/>
</dbReference>
<dbReference type="STRING" id="7955.ENSDARP00000015681"/>
<dbReference type="PaxDb" id="7955-ENSDARP00000015681"/>
<dbReference type="Ensembl" id="ENSDART00000019617">
    <property type="protein sequence ID" value="ENSDARP00000015681"/>
    <property type="gene ID" value="ENSDARG00000004952"/>
</dbReference>
<dbReference type="GeneID" id="570456"/>
<dbReference type="KEGG" id="dre:570456"/>
<dbReference type="AGR" id="ZFIN:ZDB-GENE-050913-129"/>
<dbReference type="CTD" id="91543"/>
<dbReference type="ZFIN" id="ZDB-GENE-050913-129">
    <property type="gene designation" value="rsad2"/>
</dbReference>
<dbReference type="eggNOG" id="ENOG502QQMH">
    <property type="taxonomic scope" value="Eukaryota"/>
</dbReference>
<dbReference type="HOGENOM" id="CLU_049058_2_1_1"/>
<dbReference type="InParanoid" id="Q5RH95"/>
<dbReference type="OMA" id="ERWFKKY"/>
<dbReference type="OrthoDB" id="549750at2759"/>
<dbReference type="PhylomeDB" id="Q5RH95"/>
<dbReference type="TreeFam" id="TF300085"/>
<dbReference type="PRO" id="PR:Q5RH95"/>
<dbReference type="Proteomes" id="UP000000437">
    <property type="component" value="Chromosome 17"/>
</dbReference>
<dbReference type="Bgee" id="ENSDARG00000004952">
    <property type="expression patterns" value="Expressed in spleen and 14 other cell types or tissues"/>
</dbReference>
<dbReference type="ExpressionAtlas" id="Q5RH95">
    <property type="expression patterns" value="differential"/>
</dbReference>
<dbReference type="GO" id="GO:0005783">
    <property type="term" value="C:endoplasmic reticulum"/>
    <property type="evidence" value="ECO:0000318"/>
    <property type="project" value="GO_Central"/>
</dbReference>
<dbReference type="GO" id="GO:0005789">
    <property type="term" value="C:endoplasmic reticulum membrane"/>
    <property type="evidence" value="ECO:0007669"/>
    <property type="project" value="UniProtKB-SubCell"/>
</dbReference>
<dbReference type="GO" id="GO:0005811">
    <property type="term" value="C:lipid droplet"/>
    <property type="evidence" value="ECO:0007669"/>
    <property type="project" value="InterPro"/>
</dbReference>
<dbReference type="GO" id="GO:0005739">
    <property type="term" value="C:mitochondrion"/>
    <property type="evidence" value="ECO:0000318"/>
    <property type="project" value="GO_Central"/>
</dbReference>
<dbReference type="GO" id="GO:0051539">
    <property type="term" value="F:4 iron, 4 sulfur cluster binding"/>
    <property type="evidence" value="ECO:0000318"/>
    <property type="project" value="GO_Central"/>
</dbReference>
<dbReference type="GO" id="GO:0003824">
    <property type="term" value="F:catalytic activity"/>
    <property type="evidence" value="ECO:0007669"/>
    <property type="project" value="InterPro"/>
</dbReference>
<dbReference type="GO" id="GO:0046872">
    <property type="term" value="F:metal ion binding"/>
    <property type="evidence" value="ECO:0007669"/>
    <property type="project" value="UniProtKB-KW"/>
</dbReference>
<dbReference type="GO" id="GO:0051607">
    <property type="term" value="P:defense response to virus"/>
    <property type="evidence" value="ECO:0000318"/>
    <property type="project" value="GO_Central"/>
</dbReference>
<dbReference type="GO" id="GO:0045087">
    <property type="term" value="P:innate immune response"/>
    <property type="evidence" value="ECO:0007669"/>
    <property type="project" value="UniProtKB-KW"/>
</dbReference>
<dbReference type="GO" id="GO:0050778">
    <property type="term" value="P:positive regulation of immune response"/>
    <property type="evidence" value="ECO:0000318"/>
    <property type="project" value="GO_Central"/>
</dbReference>
<dbReference type="GO" id="GO:0009615">
    <property type="term" value="P:response to virus"/>
    <property type="evidence" value="ECO:0000314"/>
    <property type="project" value="ZFIN"/>
</dbReference>
<dbReference type="CDD" id="cd01335">
    <property type="entry name" value="Radical_SAM"/>
    <property type="match status" value="1"/>
</dbReference>
<dbReference type="FunFam" id="3.20.20.70:FF:000152">
    <property type="entry name" value="radical S-adenosyl methionine domain-containing protein 2"/>
    <property type="match status" value="1"/>
</dbReference>
<dbReference type="Gene3D" id="3.20.20.70">
    <property type="entry name" value="Aldolase class I"/>
    <property type="match status" value="1"/>
</dbReference>
<dbReference type="InterPro" id="IPR013785">
    <property type="entry name" value="Aldolase_TIM"/>
</dbReference>
<dbReference type="InterPro" id="IPR006638">
    <property type="entry name" value="Elp3/MiaA/NifB-like_rSAM"/>
</dbReference>
<dbReference type="InterPro" id="IPR026372">
    <property type="entry name" value="RSAD2"/>
</dbReference>
<dbReference type="InterPro" id="IPR051196">
    <property type="entry name" value="RSAD2/Viperin_antiviral"/>
</dbReference>
<dbReference type="InterPro" id="IPR007197">
    <property type="entry name" value="rSAM"/>
</dbReference>
<dbReference type="NCBIfam" id="TIGR04278">
    <property type="entry name" value="viperin"/>
    <property type="match status" value="1"/>
</dbReference>
<dbReference type="NCBIfam" id="NF038283">
    <property type="entry name" value="viperin_w_prok"/>
    <property type="match status" value="1"/>
</dbReference>
<dbReference type="PANTHER" id="PTHR21339">
    <property type="entry name" value="RADICAL S-ADENOSYL METHIONINE DOMAIN-CONTAINING PROTEIN 2"/>
    <property type="match status" value="1"/>
</dbReference>
<dbReference type="PANTHER" id="PTHR21339:SF0">
    <property type="entry name" value="S-ADENOSYLMETHIONINE-DEPENDENT NUCLEOTIDE DEHYDRATASE RSAD2"/>
    <property type="match status" value="1"/>
</dbReference>
<dbReference type="Pfam" id="PF13353">
    <property type="entry name" value="Fer4_12"/>
    <property type="match status" value="1"/>
</dbReference>
<dbReference type="Pfam" id="PF04055">
    <property type="entry name" value="Radical_SAM"/>
    <property type="match status" value="1"/>
</dbReference>
<dbReference type="SFLD" id="SFLDS00029">
    <property type="entry name" value="Radical_SAM"/>
    <property type="match status" value="1"/>
</dbReference>
<dbReference type="SFLD" id="SFLDG01067">
    <property type="entry name" value="SPASM/twitch_domain_containing"/>
    <property type="match status" value="1"/>
</dbReference>
<dbReference type="SFLD" id="SFLDF00318">
    <property type="entry name" value="Viperin"/>
    <property type="match status" value="1"/>
</dbReference>
<dbReference type="SMART" id="SM00729">
    <property type="entry name" value="Elp3"/>
    <property type="match status" value="1"/>
</dbReference>
<dbReference type="SUPFAM" id="SSF102114">
    <property type="entry name" value="Radical SAM enzymes"/>
    <property type="match status" value="1"/>
</dbReference>
<dbReference type="PROSITE" id="PS51918">
    <property type="entry name" value="RADICAL_SAM"/>
    <property type="match status" value="1"/>
</dbReference>
<comment type="function">
    <text evidence="1">Interferon-inducible iron-sulfur (4FE-4S) cluster-binding antiviral protein which plays a major role in the cell antiviral state induced by type I and type II interferon.</text>
</comment>
<comment type="cofactor">
    <cofactor evidence="2">
        <name>[4Fe-4S] cluster</name>
        <dbReference type="ChEBI" id="CHEBI:49883"/>
    </cofactor>
    <text evidence="2">Binds 1 [4Fe-4S] cluster. The cluster is coordinated with 3 cysteines and an exchangeable S-adenosyl-L-methionine.</text>
</comment>
<comment type="subcellular location">
    <subcellularLocation>
        <location evidence="1">Endoplasmic reticulum membrane</location>
        <topology evidence="1">Peripheral membrane protein</topology>
        <orientation evidence="1">Cytoplasmic side</orientation>
    </subcellularLocation>
</comment>
<comment type="induction">
    <text evidence="5">By interferon type I, type II and LPS. Induced by infection with spring viremia of carp virus, presumably through type I interferon pathway.</text>
</comment>
<comment type="similarity">
    <text evidence="7">Belongs to the radical SAM superfamily. RSAD2 family.</text>
</comment>
<comment type="sequence caution" evidence="7">
    <conflict type="erroneous initiation">
        <sequence resource="EMBL-CDS" id="ABJ97316"/>
    </conflict>
    <text>Truncated N-terminus.</text>
</comment>
<sequence>MVTSNQLGFARLLMQLCVKNVQSFFLALLRWLSMQVSGAHVQQTPARKISRPESRTSKQKEGSRAPFTTPSSVNYHFTRQCNYKCGFCFHTAKTSFVLPIEEAKRGLRLLKEAGMEKINFSGGEPFVHQKGSFLGELVLYCKQELQLPSVSIVSNGSLIRESWFQKYGDYLDILAISCDSFIEETNQLIGRAQGRKSHLDNLHKVRNWCREYKVAFKINSVINTYNVEEDMTEQITALNPVRWKVFQCLLIEGENAGENSLREAEKFVISDQQFQDFLERHQSIQCLVPESNQKMRDSYLILDEYMRFLDCREGRKDPSKSILDVGVEEAIKFSGFDEKMFLMRGGKYVWSKADMKLEW</sequence>
<organism>
    <name type="scientific">Danio rerio</name>
    <name type="common">Zebrafish</name>
    <name type="synonym">Brachydanio rerio</name>
    <dbReference type="NCBI Taxonomy" id="7955"/>
    <lineage>
        <taxon>Eukaryota</taxon>
        <taxon>Metazoa</taxon>
        <taxon>Chordata</taxon>
        <taxon>Craniata</taxon>
        <taxon>Vertebrata</taxon>
        <taxon>Euteleostomi</taxon>
        <taxon>Actinopterygii</taxon>
        <taxon>Neopterygii</taxon>
        <taxon>Teleostei</taxon>
        <taxon>Ostariophysi</taxon>
        <taxon>Cypriniformes</taxon>
        <taxon>Danionidae</taxon>
        <taxon>Danioninae</taxon>
        <taxon>Danio</taxon>
    </lineage>
</organism>
<evidence type="ECO:0000250" key="1"/>
<evidence type="ECO:0000250" key="2">
    <source>
        <dbReference type="UniProtKB" id="Q8CBB9"/>
    </source>
</evidence>
<evidence type="ECO:0000255" key="3">
    <source>
        <dbReference type="PROSITE-ProRule" id="PRU01266"/>
    </source>
</evidence>
<evidence type="ECO:0000256" key="4">
    <source>
        <dbReference type="SAM" id="MobiDB-lite"/>
    </source>
</evidence>
<evidence type="ECO:0000269" key="5">
    <source>
    </source>
</evidence>
<evidence type="ECO:0000303" key="6">
    <source>
    </source>
</evidence>
<evidence type="ECO:0000305" key="7"/>
<evidence type="ECO:0000312" key="8">
    <source>
        <dbReference type="EMBL" id="ABJ97316.1"/>
    </source>
</evidence>
<evidence type="ECO:0000312" key="9">
    <source>
        <dbReference type="EMBL" id="CAI11967.1"/>
    </source>
</evidence>
<evidence type="ECO:0000312" key="10">
    <source>
        <dbReference type="ZFIN" id="ZDB-GENE-050913-129"/>
    </source>
</evidence>